<proteinExistence type="inferred from homology"/>
<name>DNAA_RHOP2</name>
<sequence length="472" mass="52534">MSNMEHDRWSRVKGRLRSSVGEDVYSSWFARMDLEAVQPESVHLSVPTRFLKSWIQTHYSDKVLTCWQAELPEVCRIDLTVRSPMRAAVAKEAAAPVEHRRAEHRPATETRSHATVPASSNHDALGGSPLDPRLTFASFVVGRSNTLAHAAAKQVAEGRRGDPVMFNPLYIHSGVGLGKTHLLQAVTWAGNTGIERKVLYLTAEKFMYGFVAALKTQTSLAFKEALRGIDVLVIDDLQFLQGKTTQAEFCHTLNALIDAGRQVVVAADRPPSDLESLDERVRSRLAGGLVVEMAPLGEDLRLGILKSRVVAARAHHASFDVPAPVLEYLARAITHNGRDLEGAINRLLAHSKLNAQPVTLEMAEHEVRDLIRPQEPKRIKIEDIQRIVARQYNVSRSDLLSSRRTANVVRPRQVAMYLAKTLTLRSLPEIGRRFGGRDHTTVLHAVRKIEGLVSKDTTLSDEVDSLKRQLQE</sequence>
<reference key="1">
    <citation type="submission" date="2006-01" db="EMBL/GenBank/DDBJ databases">
        <title>Complete sequence of Rhodopseudomonas palustris HaA2.</title>
        <authorList>
            <consortium name="US DOE Joint Genome Institute"/>
            <person name="Copeland A."/>
            <person name="Lucas S."/>
            <person name="Lapidus A."/>
            <person name="Barry K."/>
            <person name="Detter J.C."/>
            <person name="Glavina T."/>
            <person name="Hammon N."/>
            <person name="Israni S."/>
            <person name="Pitluck S."/>
            <person name="Chain P."/>
            <person name="Malfatti S."/>
            <person name="Shin M."/>
            <person name="Vergez L."/>
            <person name="Schmutz J."/>
            <person name="Larimer F."/>
            <person name="Land M."/>
            <person name="Hauser L."/>
            <person name="Pelletier D.A."/>
            <person name="Kyrpides N."/>
            <person name="Anderson I."/>
            <person name="Oda Y."/>
            <person name="Harwood C.S."/>
            <person name="Richardson P."/>
        </authorList>
    </citation>
    <scope>NUCLEOTIDE SEQUENCE [LARGE SCALE GENOMIC DNA]</scope>
    <source>
        <strain>HaA2</strain>
    </source>
</reference>
<evidence type="ECO:0000255" key="1">
    <source>
        <dbReference type="HAMAP-Rule" id="MF_00377"/>
    </source>
</evidence>
<evidence type="ECO:0000256" key="2">
    <source>
        <dbReference type="SAM" id="MobiDB-lite"/>
    </source>
</evidence>
<gene>
    <name evidence="1" type="primary">dnaA</name>
    <name type="ordered locus">RPB_0001</name>
</gene>
<keyword id="KW-0067">ATP-binding</keyword>
<keyword id="KW-0963">Cytoplasm</keyword>
<keyword id="KW-0235">DNA replication</keyword>
<keyword id="KW-0238">DNA-binding</keyword>
<keyword id="KW-0446">Lipid-binding</keyword>
<keyword id="KW-0547">Nucleotide-binding</keyword>
<keyword id="KW-1185">Reference proteome</keyword>
<protein>
    <recommendedName>
        <fullName evidence="1">Chromosomal replication initiator protein DnaA</fullName>
    </recommendedName>
</protein>
<feature type="chain" id="PRO_1000048702" description="Chromosomal replication initiator protein DnaA">
    <location>
        <begin position="1"/>
        <end position="472"/>
    </location>
</feature>
<feature type="region of interest" description="Domain I, interacts with DnaA modulators" evidence="1">
    <location>
        <begin position="1"/>
        <end position="73"/>
    </location>
</feature>
<feature type="region of interest" description="Domain II" evidence="1">
    <location>
        <begin position="73"/>
        <end position="128"/>
    </location>
</feature>
<feature type="region of interest" description="Disordered" evidence="2">
    <location>
        <begin position="92"/>
        <end position="127"/>
    </location>
</feature>
<feature type="region of interest" description="Domain III, AAA+ region" evidence="1">
    <location>
        <begin position="129"/>
        <end position="351"/>
    </location>
</feature>
<feature type="region of interest" description="Domain IV, binds dsDNA" evidence="1">
    <location>
        <begin position="352"/>
        <end position="472"/>
    </location>
</feature>
<feature type="compositionally biased region" description="Basic and acidic residues" evidence="2">
    <location>
        <begin position="97"/>
        <end position="112"/>
    </location>
</feature>
<feature type="binding site" evidence="1">
    <location>
        <position position="176"/>
    </location>
    <ligand>
        <name>ATP</name>
        <dbReference type="ChEBI" id="CHEBI:30616"/>
    </ligand>
</feature>
<feature type="binding site" evidence="1">
    <location>
        <position position="178"/>
    </location>
    <ligand>
        <name>ATP</name>
        <dbReference type="ChEBI" id="CHEBI:30616"/>
    </ligand>
</feature>
<feature type="binding site" evidence="1">
    <location>
        <position position="179"/>
    </location>
    <ligand>
        <name>ATP</name>
        <dbReference type="ChEBI" id="CHEBI:30616"/>
    </ligand>
</feature>
<feature type="binding site" evidence="1">
    <location>
        <position position="180"/>
    </location>
    <ligand>
        <name>ATP</name>
        <dbReference type="ChEBI" id="CHEBI:30616"/>
    </ligand>
</feature>
<organism>
    <name type="scientific">Rhodopseudomonas palustris (strain HaA2)</name>
    <dbReference type="NCBI Taxonomy" id="316058"/>
    <lineage>
        <taxon>Bacteria</taxon>
        <taxon>Pseudomonadati</taxon>
        <taxon>Pseudomonadota</taxon>
        <taxon>Alphaproteobacteria</taxon>
        <taxon>Hyphomicrobiales</taxon>
        <taxon>Nitrobacteraceae</taxon>
        <taxon>Rhodopseudomonas</taxon>
    </lineage>
</organism>
<comment type="function">
    <text evidence="1">Plays an essential role in the initiation and regulation of chromosomal replication. ATP-DnaA binds to the origin of replication (oriC) to initiate formation of the DNA replication initiation complex once per cell cycle. Binds the DnaA box (a 9 base pair repeat at the origin) and separates the double-stranded (ds)DNA. Forms a right-handed helical filament on oriC DNA; dsDNA binds to the exterior of the filament while single-stranded (ss)DNA is stabiized in the filament's interior. The ATP-DnaA-oriC complex binds and stabilizes one strand of the AT-rich DNA unwinding element (DUE), permitting loading of DNA polymerase. After initiation quickly degrades to an ADP-DnaA complex that is not apt for DNA replication. Binds acidic phospholipids.</text>
</comment>
<comment type="subunit">
    <text evidence="1">Oligomerizes as a right-handed, spiral filament on DNA at oriC.</text>
</comment>
<comment type="subcellular location">
    <subcellularLocation>
        <location evidence="1">Cytoplasm</location>
    </subcellularLocation>
</comment>
<comment type="domain">
    <text evidence="1">Domain I is involved in oligomerization and binding regulators, domain II is flexibile and of varying length in different bacteria, domain III forms the AAA+ region, while domain IV binds dsDNA.</text>
</comment>
<comment type="similarity">
    <text evidence="1">Belongs to the DnaA family.</text>
</comment>
<dbReference type="EMBL" id="CP000250">
    <property type="protein sequence ID" value="ABD04713.1"/>
    <property type="molecule type" value="Genomic_DNA"/>
</dbReference>
<dbReference type="RefSeq" id="WP_011438903.1">
    <property type="nucleotide sequence ID" value="NC_007778.1"/>
</dbReference>
<dbReference type="SMR" id="Q2J497"/>
<dbReference type="STRING" id="316058.RPB_0001"/>
<dbReference type="KEGG" id="rpb:RPB_0001"/>
<dbReference type="eggNOG" id="COG0593">
    <property type="taxonomic scope" value="Bacteria"/>
</dbReference>
<dbReference type="HOGENOM" id="CLU_026910_3_0_5"/>
<dbReference type="OrthoDB" id="9807019at2"/>
<dbReference type="Proteomes" id="UP000008809">
    <property type="component" value="Chromosome"/>
</dbReference>
<dbReference type="GO" id="GO:0005737">
    <property type="term" value="C:cytoplasm"/>
    <property type="evidence" value="ECO:0007669"/>
    <property type="project" value="UniProtKB-SubCell"/>
</dbReference>
<dbReference type="GO" id="GO:0005886">
    <property type="term" value="C:plasma membrane"/>
    <property type="evidence" value="ECO:0007669"/>
    <property type="project" value="TreeGrafter"/>
</dbReference>
<dbReference type="GO" id="GO:0005524">
    <property type="term" value="F:ATP binding"/>
    <property type="evidence" value="ECO:0007669"/>
    <property type="project" value="UniProtKB-UniRule"/>
</dbReference>
<dbReference type="GO" id="GO:0016887">
    <property type="term" value="F:ATP hydrolysis activity"/>
    <property type="evidence" value="ECO:0007669"/>
    <property type="project" value="InterPro"/>
</dbReference>
<dbReference type="GO" id="GO:0003688">
    <property type="term" value="F:DNA replication origin binding"/>
    <property type="evidence" value="ECO:0007669"/>
    <property type="project" value="UniProtKB-UniRule"/>
</dbReference>
<dbReference type="GO" id="GO:0008289">
    <property type="term" value="F:lipid binding"/>
    <property type="evidence" value="ECO:0007669"/>
    <property type="project" value="UniProtKB-KW"/>
</dbReference>
<dbReference type="GO" id="GO:0006270">
    <property type="term" value="P:DNA replication initiation"/>
    <property type="evidence" value="ECO:0007669"/>
    <property type="project" value="UniProtKB-UniRule"/>
</dbReference>
<dbReference type="GO" id="GO:0006275">
    <property type="term" value="P:regulation of DNA replication"/>
    <property type="evidence" value="ECO:0007669"/>
    <property type="project" value="UniProtKB-UniRule"/>
</dbReference>
<dbReference type="CDD" id="cd00009">
    <property type="entry name" value="AAA"/>
    <property type="match status" value="1"/>
</dbReference>
<dbReference type="CDD" id="cd06571">
    <property type="entry name" value="Bac_DnaA_C"/>
    <property type="match status" value="1"/>
</dbReference>
<dbReference type="FunFam" id="1.10.1750.10:FF:000002">
    <property type="entry name" value="Chromosomal replication initiator protein DnaA"/>
    <property type="match status" value="1"/>
</dbReference>
<dbReference type="FunFam" id="3.40.50.300:FF:000668">
    <property type="entry name" value="Chromosomal replication initiator protein DnaA"/>
    <property type="match status" value="1"/>
</dbReference>
<dbReference type="Gene3D" id="1.10.1750.10">
    <property type="match status" value="1"/>
</dbReference>
<dbReference type="Gene3D" id="1.10.8.60">
    <property type="match status" value="1"/>
</dbReference>
<dbReference type="Gene3D" id="3.30.300.180">
    <property type="match status" value="1"/>
</dbReference>
<dbReference type="Gene3D" id="3.40.50.300">
    <property type="entry name" value="P-loop containing nucleotide triphosphate hydrolases"/>
    <property type="match status" value="1"/>
</dbReference>
<dbReference type="HAMAP" id="MF_00377">
    <property type="entry name" value="DnaA_bact"/>
    <property type="match status" value="1"/>
</dbReference>
<dbReference type="InterPro" id="IPR003593">
    <property type="entry name" value="AAA+_ATPase"/>
</dbReference>
<dbReference type="InterPro" id="IPR001957">
    <property type="entry name" value="Chromosome_initiator_DnaA"/>
</dbReference>
<dbReference type="InterPro" id="IPR020591">
    <property type="entry name" value="Chromosome_initiator_DnaA-like"/>
</dbReference>
<dbReference type="InterPro" id="IPR018312">
    <property type="entry name" value="Chromosome_initiator_DnaA_CS"/>
</dbReference>
<dbReference type="InterPro" id="IPR013159">
    <property type="entry name" value="DnaA_C"/>
</dbReference>
<dbReference type="InterPro" id="IPR013317">
    <property type="entry name" value="DnaA_dom"/>
</dbReference>
<dbReference type="InterPro" id="IPR024633">
    <property type="entry name" value="DnaA_N_dom"/>
</dbReference>
<dbReference type="InterPro" id="IPR038454">
    <property type="entry name" value="DnaA_N_sf"/>
</dbReference>
<dbReference type="InterPro" id="IPR027417">
    <property type="entry name" value="P-loop_NTPase"/>
</dbReference>
<dbReference type="InterPro" id="IPR010921">
    <property type="entry name" value="Trp_repressor/repl_initiator"/>
</dbReference>
<dbReference type="NCBIfam" id="TIGR00362">
    <property type="entry name" value="DnaA"/>
    <property type="match status" value="1"/>
</dbReference>
<dbReference type="PANTHER" id="PTHR30050">
    <property type="entry name" value="CHROMOSOMAL REPLICATION INITIATOR PROTEIN DNAA"/>
    <property type="match status" value="1"/>
</dbReference>
<dbReference type="PANTHER" id="PTHR30050:SF2">
    <property type="entry name" value="CHROMOSOMAL REPLICATION INITIATOR PROTEIN DNAA"/>
    <property type="match status" value="1"/>
</dbReference>
<dbReference type="Pfam" id="PF00308">
    <property type="entry name" value="Bac_DnaA"/>
    <property type="match status" value="1"/>
</dbReference>
<dbReference type="Pfam" id="PF08299">
    <property type="entry name" value="Bac_DnaA_C"/>
    <property type="match status" value="1"/>
</dbReference>
<dbReference type="Pfam" id="PF11638">
    <property type="entry name" value="DnaA_N"/>
    <property type="match status" value="1"/>
</dbReference>
<dbReference type="PRINTS" id="PR00051">
    <property type="entry name" value="DNAA"/>
</dbReference>
<dbReference type="SMART" id="SM00382">
    <property type="entry name" value="AAA"/>
    <property type="match status" value="1"/>
</dbReference>
<dbReference type="SMART" id="SM00760">
    <property type="entry name" value="Bac_DnaA_C"/>
    <property type="match status" value="1"/>
</dbReference>
<dbReference type="SUPFAM" id="SSF52540">
    <property type="entry name" value="P-loop containing nucleoside triphosphate hydrolases"/>
    <property type="match status" value="1"/>
</dbReference>
<dbReference type="SUPFAM" id="SSF48295">
    <property type="entry name" value="TrpR-like"/>
    <property type="match status" value="1"/>
</dbReference>
<dbReference type="PROSITE" id="PS01008">
    <property type="entry name" value="DNAA"/>
    <property type="match status" value="1"/>
</dbReference>
<accession>Q2J497</accession>